<feature type="chain" id="PRO_0000209064" description="Probable potassium transport system protein Kup">
    <location>
        <begin position="1"/>
        <end position="666"/>
    </location>
</feature>
<feature type="transmembrane region" description="Helical" evidence="1">
    <location>
        <begin position="16"/>
        <end position="36"/>
    </location>
</feature>
<feature type="transmembrane region" description="Helical" evidence="1">
    <location>
        <begin position="58"/>
        <end position="78"/>
    </location>
</feature>
<feature type="transmembrane region" description="Helical" evidence="1">
    <location>
        <begin position="100"/>
        <end position="120"/>
    </location>
</feature>
<feature type="transmembrane region" description="Helical" evidence="1">
    <location>
        <begin position="141"/>
        <end position="161"/>
    </location>
</feature>
<feature type="transmembrane region" description="Helical" evidence="1">
    <location>
        <begin position="165"/>
        <end position="185"/>
    </location>
</feature>
<feature type="transmembrane region" description="Helical" evidence="1">
    <location>
        <begin position="221"/>
        <end position="241"/>
    </location>
</feature>
<feature type="transmembrane region" description="Helical" evidence="1">
    <location>
        <begin position="253"/>
        <end position="273"/>
    </location>
</feature>
<feature type="transmembrane region" description="Helical" evidence="1">
    <location>
        <begin position="292"/>
        <end position="312"/>
    </location>
</feature>
<feature type="transmembrane region" description="Helical" evidence="1">
    <location>
        <begin position="343"/>
        <end position="363"/>
    </location>
</feature>
<feature type="transmembrane region" description="Helical" evidence="1">
    <location>
        <begin position="373"/>
        <end position="393"/>
    </location>
</feature>
<feature type="transmembrane region" description="Helical" evidence="1">
    <location>
        <begin position="399"/>
        <end position="419"/>
    </location>
</feature>
<feature type="transmembrane region" description="Helical" evidence="1">
    <location>
        <begin position="424"/>
        <end position="444"/>
    </location>
</feature>
<reference key="1">
    <citation type="journal article" date="2002" name="Proc. Natl. Acad. Sci. U.S.A.">
        <title>Genome sequence and comparative microarray analysis of serotype M18 group A Streptococcus strains associated with acute rheumatic fever outbreaks.</title>
        <authorList>
            <person name="Smoot J.C."/>
            <person name="Barbian K.D."/>
            <person name="Van Gompel J.J."/>
            <person name="Smoot L.M."/>
            <person name="Chaussee M.S."/>
            <person name="Sylva G.L."/>
            <person name="Sturdevant D.E."/>
            <person name="Ricklefs S.M."/>
            <person name="Porcella S.F."/>
            <person name="Parkins L.D."/>
            <person name="Beres S.B."/>
            <person name="Campbell D.S."/>
            <person name="Smith T.M."/>
            <person name="Zhang Q."/>
            <person name="Kapur V."/>
            <person name="Daly J.A."/>
            <person name="Veasy L.G."/>
            <person name="Musser J.M."/>
        </authorList>
    </citation>
    <scope>NUCLEOTIDE SEQUENCE [LARGE SCALE GENOMIC DNA]</scope>
    <source>
        <strain>MGAS8232</strain>
    </source>
</reference>
<gene>
    <name evidence="1" type="primary">kup</name>
    <name type="ordered locus">spyM18_1423</name>
</gene>
<accession>Q8P0C8</accession>
<proteinExistence type="inferred from homology"/>
<name>KUP_STRP8</name>
<protein>
    <recommendedName>
        <fullName evidence="1">Probable potassium transport system protein Kup</fullName>
    </recommendedName>
</protein>
<organism>
    <name type="scientific">Streptococcus pyogenes serotype M18 (strain MGAS8232)</name>
    <dbReference type="NCBI Taxonomy" id="186103"/>
    <lineage>
        <taxon>Bacteria</taxon>
        <taxon>Bacillati</taxon>
        <taxon>Bacillota</taxon>
        <taxon>Bacilli</taxon>
        <taxon>Lactobacillales</taxon>
        <taxon>Streptococcaceae</taxon>
        <taxon>Streptococcus</taxon>
    </lineage>
</organism>
<evidence type="ECO:0000255" key="1">
    <source>
        <dbReference type="HAMAP-Rule" id="MF_01522"/>
    </source>
</evidence>
<comment type="function">
    <text evidence="1">Transport of potassium into the cell. Likely operates as a K(+):H(+) symporter.</text>
</comment>
<comment type="catalytic activity">
    <reaction evidence="1">
        <text>K(+)(in) + H(+)(in) = K(+)(out) + H(+)(out)</text>
        <dbReference type="Rhea" id="RHEA:28490"/>
        <dbReference type="ChEBI" id="CHEBI:15378"/>
        <dbReference type="ChEBI" id="CHEBI:29103"/>
    </reaction>
    <physiologicalReaction direction="right-to-left" evidence="1">
        <dbReference type="Rhea" id="RHEA:28492"/>
    </physiologicalReaction>
</comment>
<comment type="subcellular location">
    <subcellularLocation>
        <location evidence="1">Cell membrane</location>
        <topology evidence="1">Multi-pass membrane protein</topology>
    </subcellularLocation>
</comment>
<comment type="similarity">
    <text evidence="1">Belongs to the HAK/KUP transporter (TC 2.A.72) family.</text>
</comment>
<dbReference type="EMBL" id="AE009949">
    <property type="protein sequence ID" value="AAL98010.1"/>
    <property type="molecule type" value="Genomic_DNA"/>
</dbReference>
<dbReference type="RefSeq" id="WP_011017954.1">
    <property type="nucleotide sequence ID" value="NC_003485.1"/>
</dbReference>
<dbReference type="KEGG" id="spm:spyM18_1423"/>
<dbReference type="HOGENOM" id="CLU_008142_4_1_9"/>
<dbReference type="GO" id="GO:0005886">
    <property type="term" value="C:plasma membrane"/>
    <property type="evidence" value="ECO:0007669"/>
    <property type="project" value="UniProtKB-SubCell"/>
</dbReference>
<dbReference type="GO" id="GO:0015079">
    <property type="term" value="F:potassium ion transmembrane transporter activity"/>
    <property type="evidence" value="ECO:0007669"/>
    <property type="project" value="UniProtKB-UniRule"/>
</dbReference>
<dbReference type="GO" id="GO:0015293">
    <property type="term" value="F:symporter activity"/>
    <property type="evidence" value="ECO:0007669"/>
    <property type="project" value="UniProtKB-UniRule"/>
</dbReference>
<dbReference type="HAMAP" id="MF_01522">
    <property type="entry name" value="Kup"/>
    <property type="match status" value="1"/>
</dbReference>
<dbReference type="InterPro" id="IPR003855">
    <property type="entry name" value="K+_transporter"/>
</dbReference>
<dbReference type="InterPro" id="IPR053952">
    <property type="entry name" value="K_trans_C"/>
</dbReference>
<dbReference type="InterPro" id="IPR053951">
    <property type="entry name" value="K_trans_N"/>
</dbReference>
<dbReference type="InterPro" id="IPR023051">
    <property type="entry name" value="Kup"/>
</dbReference>
<dbReference type="PANTHER" id="PTHR30540:SF83">
    <property type="entry name" value="K+ POTASSIUM TRANSPORTER"/>
    <property type="match status" value="1"/>
</dbReference>
<dbReference type="PANTHER" id="PTHR30540">
    <property type="entry name" value="OSMOTIC STRESS POTASSIUM TRANSPORTER"/>
    <property type="match status" value="1"/>
</dbReference>
<dbReference type="Pfam" id="PF02705">
    <property type="entry name" value="K_trans"/>
    <property type="match status" value="1"/>
</dbReference>
<dbReference type="Pfam" id="PF22776">
    <property type="entry name" value="K_trans_C"/>
    <property type="match status" value="1"/>
</dbReference>
<sequence>MSDSHLTAFDKASKAGFIIALGIVYGDIGTSPLYTMQSLVENQGGVNQVSESFILGSISLIIWTLTLITTIKYVLIALKADNHHEGGIFSLFTLVRKMSPWLIIPAMIGGATLLSDGALTPAVTVTSAIEGLKAVPGLSHIYQNQTNVIITTLVILIVLFGIQRFGTGFIGKIFGPVMFIWFSFLGVSGFFNTLGHLEIFKAINPYYALHLLFSPENHRGIFILGSIFLATTGAEALYSDLGHVGRGNIYVSWPFVKMCIVLSYCGQAAWILANKHSGIELNPFFASVPSQLTVYVVILATLAAIIASQALISGSFTLVSEAMRLKIFPLFRVTYPGANLGQLYIPVINWILFAVTSCTVLYFRTSAHMEAAYGLAITITMLMTTILLNYYLIKEGVKPFLAHLVMTFFALVEFIFFWASAVKFMHGGYVVVILALAIVFVMFIWHAGTRIVFKYVKSLNLNDYKEQIKQLRDDVCFDLYQTNVVYLSNRMQDYMIDRSILYSILDKRPKRARVYWFVNVQVTDEPYTAKYKVDMMGTDYMVRVELYLGFRMPQAVPRYLRTIVHDLMESGRLPKQEQEYTITPGRDVGDFRFVLIEERVSNARQLSNFERFIMQTKASIKHVTASPMRWFGLQYSEVTLEVVPLILSDVLKLPIKELVPVEDSEA</sequence>
<keyword id="KW-1003">Cell membrane</keyword>
<keyword id="KW-0406">Ion transport</keyword>
<keyword id="KW-0472">Membrane</keyword>
<keyword id="KW-0630">Potassium</keyword>
<keyword id="KW-0633">Potassium transport</keyword>
<keyword id="KW-0769">Symport</keyword>
<keyword id="KW-0812">Transmembrane</keyword>
<keyword id="KW-1133">Transmembrane helix</keyword>
<keyword id="KW-0813">Transport</keyword>